<reference key="1">
    <citation type="journal article" date="2007" name="J. Bacteriol.">
        <title>Whole-genome analysis of the methyl tert-butyl ether-degrading beta-proteobacterium Methylibium petroleiphilum PM1.</title>
        <authorList>
            <person name="Kane S.R."/>
            <person name="Chakicherla A.Y."/>
            <person name="Chain P.S.G."/>
            <person name="Schmidt R."/>
            <person name="Shin M.W."/>
            <person name="Legler T.C."/>
            <person name="Scow K.M."/>
            <person name="Larimer F.W."/>
            <person name="Lucas S.M."/>
            <person name="Richardson P.M."/>
            <person name="Hristova K.R."/>
        </authorList>
    </citation>
    <scope>NUCLEOTIDE SEQUENCE [LARGE SCALE GENOMIC DNA]</scope>
    <source>
        <strain>ATCC BAA-1232 / LMG 22953 / PM1</strain>
    </source>
</reference>
<accession>A2SL00</accession>
<feature type="chain" id="PRO_1000212056" description="Adenosylhomocysteinase">
    <location>
        <begin position="1"/>
        <end position="477"/>
    </location>
</feature>
<feature type="binding site" evidence="1">
    <location>
        <position position="63"/>
    </location>
    <ligand>
        <name>substrate</name>
    </ligand>
</feature>
<feature type="binding site" evidence="1">
    <location>
        <position position="142"/>
    </location>
    <ligand>
        <name>substrate</name>
    </ligand>
</feature>
<feature type="binding site" evidence="1">
    <location>
        <position position="202"/>
    </location>
    <ligand>
        <name>substrate</name>
    </ligand>
</feature>
<feature type="binding site" evidence="1">
    <location>
        <begin position="203"/>
        <end position="205"/>
    </location>
    <ligand>
        <name>NAD(+)</name>
        <dbReference type="ChEBI" id="CHEBI:57540"/>
    </ligand>
</feature>
<feature type="binding site" evidence="1">
    <location>
        <position position="232"/>
    </location>
    <ligand>
        <name>substrate</name>
    </ligand>
</feature>
<feature type="binding site" evidence="1">
    <location>
        <position position="236"/>
    </location>
    <ligand>
        <name>substrate</name>
    </ligand>
</feature>
<feature type="binding site" evidence="1">
    <location>
        <position position="237"/>
    </location>
    <ligand>
        <name>NAD(+)</name>
        <dbReference type="ChEBI" id="CHEBI:57540"/>
    </ligand>
</feature>
<feature type="binding site" evidence="1">
    <location>
        <begin position="266"/>
        <end position="271"/>
    </location>
    <ligand>
        <name>NAD(+)</name>
        <dbReference type="ChEBI" id="CHEBI:57540"/>
    </ligand>
</feature>
<feature type="binding site" evidence="1">
    <location>
        <position position="289"/>
    </location>
    <ligand>
        <name>NAD(+)</name>
        <dbReference type="ChEBI" id="CHEBI:57540"/>
    </ligand>
</feature>
<feature type="binding site" evidence="1">
    <location>
        <position position="324"/>
    </location>
    <ligand>
        <name>NAD(+)</name>
        <dbReference type="ChEBI" id="CHEBI:57540"/>
    </ligand>
</feature>
<feature type="binding site" evidence="1">
    <location>
        <begin position="345"/>
        <end position="347"/>
    </location>
    <ligand>
        <name>NAD(+)</name>
        <dbReference type="ChEBI" id="CHEBI:57540"/>
    </ligand>
</feature>
<feature type="binding site" evidence="1">
    <location>
        <position position="390"/>
    </location>
    <ligand>
        <name>NAD(+)</name>
        <dbReference type="ChEBI" id="CHEBI:57540"/>
    </ligand>
</feature>
<sequence>MSAVLKPTPTHDHHVADLSLADWGRKEIKIAETEMPGLMAIRQEFAASQPLKGARITGSLHMTIQTAVLVETLQALGAQVRWASCNIFSTQDHAAAALVAAGTPVFAYKGETLTDYWDYTHRIFDFGAKGTDGEGPNMILDDGGDATLLMHLGQKAEKDPSVISKPTSEEETCLFAAIKAKLAQDPTWYTRKSAQIIGVTEETTTGVHRLNEMSAKGTLLFRAINVNDSVTKSKFDNLYGCRESLVDSIKRATDVMIAGKVACVAGYGDVGKGSAQALRALSAQVWVTEIDPINALQAAMEGYKVVTMEYAADKADIFVSATGNKNVIRYEHMAAMKDEAIVCNIGHFDNEIDVASLEKLKWDEIKPQVDHVVFPDGKKITLLAKGRLVNLGCATGHPSFVMSSSFANQTIAQIELFTKSADYQVGKVYVLPKHLDEKVARLHLKKVGAMLTELTDEQAAYIGVSKSGPYKADTYRY</sequence>
<comment type="function">
    <text evidence="1">May play a key role in the regulation of the intracellular concentration of adenosylhomocysteine.</text>
</comment>
<comment type="catalytic activity">
    <reaction evidence="1">
        <text>S-adenosyl-L-homocysteine + H2O = L-homocysteine + adenosine</text>
        <dbReference type="Rhea" id="RHEA:21708"/>
        <dbReference type="ChEBI" id="CHEBI:15377"/>
        <dbReference type="ChEBI" id="CHEBI:16335"/>
        <dbReference type="ChEBI" id="CHEBI:57856"/>
        <dbReference type="ChEBI" id="CHEBI:58199"/>
        <dbReference type="EC" id="3.13.2.1"/>
    </reaction>
</comment>
<comment type="cofactor">
    <cofactor evidence="1">
        <name>NAD(+)</name>
        <dbReference type="ChEBI" id="CHEBI:57540"/>
    </cofactor>
    <text evidence="1">Binds 1 NAD(+) per subunit.</text>
</comment>
<comment type="pathway">
    <text evidence="1">Amino-acid biosynthesis; L-homocysteine biosynthesis; L-homocysteine from S-adenosyl-L-homocysteine: step 1/1.</text>
</comment>
<comment type="subcellular location">
    <subcellularLocation>
        <location evidence="1">Cytoplasm</location>
    </subcellularLocation>
</comment>
<comment type="similarity">
    <text evidence="1">Belongs to the adenosylhomocysteinase family.</text>
</comment>
<keyword id="KW-0963">Cytoplasm</keyword>
<keyword id="KW-0378">Hydrolase</keyword>
<keyword id="KW-0520">NAD</keyword>
<keyword id="KW-0554">One-carbon metabolism</keyword>
<keyword id="KW-1185">Reference proteome</keyword>
<gene>
    <name evidence="1" type="primary">ahcY</name>
    <name type="ordered locus">Mpe_A3286</name>
</gene>
<proteinExistence type="inferred from homology"/>
<organism>
    <name type="scientific">Methylibium petroleiphilum (strain ATCC BAA-1232 / LMG 22953 / PM1)</name>
    <dbReference type="NCBI Taxonomy" id="420662"/>
    <lineage>
        <taxon>Bacteria</taxon>
        <taxon>Pseudomonadati</taxon>
        <taxon>Pseudomonadota</taxon>
        <taxon>Betaproteobacteria</taxon>
        <taxon>Burkholderiales</taxon>
        <taxon>Sphaerotilaceae</taxon>
        <taxon>Methylibium</taxon>
    </lineage>
</organism>
<protein>
    <recommendedName>
        <fullName evidence="1">Adenosylhomocysteinase</fullName>
        <ecNumber evidence="1">3.13.2.1</ecNumber>
    </recommendedName>
    <alternativeName>
        <fullName evidence="1">S-adenosyl-L-homocysteine hydrolase</fullName>
        <shortName evidence="1">AdoHcyase</shortName>
    </alternativeName>
</protein>
<evidence type="ECO:0000255" key="1">
    <source>
        <dbReference type="HAMAP-Rule" id="MF_00563"/>
    </source>
</evidence>
<name>SAHH_METPP</name>
<dbReference type="EC" id="3.13.2.1" evidence="1"/>
<dbReference type="EMBL" id="CP000555">
    <property type="protein sequence ID" value="ABM96239.1"/>
    <property type="molecule type" value="Genomic_DNA"/>
</dbReference>
<dbReference type="RefSeq" id="WP_011830862.1">
    <property type="nucleotide sequence ID" value="NC_008825.1"/>
</dbReference>
<dbReference type="SMR" id="A2SL00"/>
<dbReference type="STRING" id="420662.Mpe_A3286"/>
<dbReference type="KEGG" id="mpt:Mpe_A3286"/>
<dbReference type="eggNOG" id="COG0499">
    <property type="taxonomic scope" value="Bacteria"/>
</dbReference>
<dbReference type="HOGENOM" id="CLU_025194_2_1_4"/>
<dbReference type="UniPathway" id="UPA00314">
    <property type="reaction ID" value="UER00076"/>
</dbReference>
<dbReference type="Proteomes" id="UP000000366">
    <property type="component" value="Chromosome"/>
</dbReference>
<dbReference type="GO" id="GO:0005829">
    <property type="term" value="C:cytosol"/>
    <property type="evidence" value="ECO:0007669"/>
    <property type="project" value="TreeGrafter"/>
</dbReference>
<dbReference type="GO" id="GO:0004013">
    <property type="term" value="F:adenosylhomocysteinase activity"/>
    <property type="evidence" value="ECO:0007669"/>
    <property type="project" value="UniProtKB-UniRule"/>
</dbReference>
<dbReference type="GO" id="GO:0071269">
    <property type="term" value="P:L-homocysteine biosynthetic process"/>
    <property type="evidence" value="ECO:0007669"/>
    <property type="project" value="UniProtKB-UniRule"/>
</dbReference>
<dbReference type="GO" id="GO:0006730">
    <property type="term" value="P:one-carbon metabolic process"/>
    <property type="evidence" value="ECO:0007669"/>
    <property type="project" value="UniProtKB-KW"/>
</dbReference>
<dbReference type="GO" id="GO:0033353">
    <property type="term" value="P:S-adenosylmethionine cycle"/>
    <property type="evidence" value="ECO:0007669"/>
    <property type="project" value="TreeGrafter"/>
</dbReference>
<dbReference type="CDD" id="cd00401">
    <property type="entry name" value="SAHH"/>
    <property type="match status" value="1"/>
</dbReference>
<dbReference type="FunFam" id="3.40.50.720:FF:000004">
    <property type="entry name" value="Adenosylhomocysteinase"/>
    <property type="match status" value="1"/>
</dbReference>
<dbReference type="Gene3D" id="3.40.50.1480">
    <property type="entry name" value="Adenosylhomocysteinase-like"/>
    <property type="match status" value="1"/>
</dbReference>
<dbReference type="Gene3D" id="3.40.50.720">
    <property type="entry name" value="NAD(P)-binding Rossmann-like Domain"/>
    <property type="match status" value="1"/>
</dbReference>
<dbReference type="HAMAP" id="MF_00563">
    <property type="entry name" value="AdoHcyase"/>
    <property type="match status" value="1"/>
</dbReference>
<dbReference type="InterPro" id="IPR042172">
    <property type="entry name" value="Adenosylhomocyst_ase-like_sf"/>
</dbReference>
<dbReference type="InterPro" id="IPR000043">
    <property type="entry name" value="Adenosylhomocysteinase-like"/>
</dbReference>
<dbReference type="InterPro" id="IPR015878">
    <property type="entry name" value="Ado_hCys_hydrolase_NAD-bd"/>
</dbReference>
<dbReference type="InterPro" id="IPR036291">
    <property type="entry name" value="NAD(P)-bd_dom_sf"/>
</dbReference>
<dbReference type="InterPro" id="IPR020082">
    <property type="entry name" value="S-Ado-L-homoCys_hydrolase_CS"/>
</dbReference>
<dbReference type="NCBIfam" id="TIGR00936">
    <property type="entry name" value="ahcY"/>
    <property type="match status" value="1"/>
</dbReference>
<dbReference type="NCBIfam" id="NF004005">
    <property type="entry name" value="PRK05476.2-3"/>
    <property type="match status" value="1"/>
</dbReference>
<dbReference type="PANTHER" id="PTHR23420">
    <property type="entry name" value="ADENOSYLHOMOCYSTEINASE"/>
    <property type="match status" value="1"/>
</dbReference>
<dbReference type="PANTHER" id="PTHR23420:SF0">
    <property type="entry name" value="ADENOSYLHOMOCYSTEINASE"/>
    <property type="match status" value="1"/>
</dbReference>
<dbReference type="Pfam" id="PF05221">
    <property type="entry name" value="AdoHcyase"/>
    <property type="match status" value="1"/>
</dbReference>
<dbReference type="Pfam" id="PF00670">
    <property type="entry name" value="AdoHcyase_NAD"/>
    <property type="match status" value="1"/>
</dbReference>
<dbReference type="PIRSF" id="PIRSF001109">
    <property type="entry name" value="Ad_hcy_hydrolase"/>
    <property type="match status" value="1"/>
</dbReference>
<dbReference type="SMART" id="SM00996">
    <property type="entry name" value="AdoHcyase"/>
    <property type="match status" value="1"/>
</dbReference>
<dbReference type="SMART" id="SM00997">
    <property type="entry name" value="AdoHcyase_NAD"/>
    <property type="match status" value="1"/>
</dbReference>
<dbReference type="SUPFAM" id="SSF52283">
    <property type="entry name" value="Formate/glycerate dehydrogenase catalytic domain-like"/>
    <property type="match status" value="1"/>
</dbReference>
<dbReference type="SUPFAM" id="SSF51735">
    <property type="entry name" value="NAD(P)-binding Rossmann-fold domains"/>
    <property type="match status" value="1"/>
</dbReference>
<dbReference type="PROSITE" id="PS00738">
    <property type="entry name" value="ADOHCYASE_1"/>
    <property type="match status" value="1"/>
</dbReference>
<dbReference type="PROSITE" id="PS00739">
    <property type="entry name" value="ADOHCYASE_2"/>
    <property type="match status" value="1"/>
</dbReference>